<proteinExistence type="inferred from homology"/>
<accession>Q1IW72</accession>
<reference key="1">
    <citation type="submission" date="2006-04" db="EMBL/GenBank/DDBJ databases">
        <title>Complete sequence of chromosome of Deinococcus geothermalis DSM 11300.</title>
        <authorList>
            <person name="Copeland A."/>
            <person name="Lucas S."/>
            <person name="Lapidus A."/>
            <person name="Barry K."/>
            <person name="Detter J.C."/>
            <person name="Glavina del Rio T."/>
            <person name="Hammon N."/>
            <person name="Israni S."/>
            <person name="Dalin E."/>
            <person name="Tice H."/>
            <person name="Pitluck S."/>
            <person name="Brettin T."/>
            <person name="Bruce D."/>
            <person name="Han C."/>
            <person name="Tapia R."/>
            <person name="Saunders E."/>
            <person name="Gilna P."/>
            <person name="Schmutz J."/>
            <person name="Larimer F."/>
            <person name="Land M."/>
            <person name="Hauser L."/>
            <person name="Kyrpides N."/>
            <person name="Kim E."/>
            <person name="Daly M.J."/>
            <person name="Fredrickson J.K."/>
            <person name="Makarova K.S."/>
            <person name="Gaidamakova E.K."/>
            <person name="Zhai M."/>
            <person name="Richardson P."/>
        </authorList>
    </citation>
    <scope>NUCLEOTIDE SEQUENCE [LARGE SCALE GENOMIC DNA]</scope>
    <source>
        <strain>DSM 11300 / CIP 105573 / AG-3a</strain>
    </source>
</reference>
<gene>
    <name evidence="1" type="primary">obg</name>
    <name type="ordered locus">Dgeo_2218</name>
</gene>
<feature type="chain" id="PRO_0000385878" description="GTPase Obg">
    <location>
        <begin position="1"/>
        <end position="433"/>
    </location>
</feature>
<feature type="domain" description="Obg" evidence="3">
    <location>
        <begin position="1"/>
        <end position="159"/>
    </location>
</feature>
<feature type="domain" description="OBG-type G" evidence="1">
    <location>
        <begin position="160"/>
        <end position="327"/>
    </location>
</feature>
<feature type="domain" description="OCT" evidence="2">
    <location>
        <begin position="342"/>
        <end position="430"/>
    </location>
</feature>
<feature type="binding site" evidence="1">
    <location>
        <begin position="166"/>
        <end position="173"/>
    </location>
    <ligand>
        <name>ATP</name>
        <dbReference type="ChEBI" id="CHEBI:30616"/>
    </ligand>
</feature>
<feature type="binding site" evidence="1">
    <location>
        <position position="173"/>
    </location>
    <ligand>
        <name>Mg(2+)</name>
        <dbReference type="ChEBI" id="CHEBI:18420"/>
    </ligand>
</feature>
<feature type="binding site" evidence="1">
    <location>
        <begin position="191"/>
        <end position="195"/>
    </location>
    <ligand>
        <name>ATP</name>
        <dbReference type="ChEBI" id="CHEBI:30616"/>
    </ligand>
</feature>
<feature type="binding site" evidence="1">
    <location>
        <position position="193"/>
    </location>
    <ligand>
        <name>Mg(2+)</name>
        <dbReference type="ChEBI" id="CHEBI:18420"/>
    </ligand>
</feature>
<feature type="binding site" evidence="1">
    <location>
        <begin position="214"/>
        <end position="217"/>
    </location>
    <ligand>
        <name>ATP</name>
        <dbReference type="ChEBI" id="CHEBI:30616"/>
    </ligand>
</feature>
<feature type="binding site" evidence="1">
    <location>
        <begin position="280"/>
        <end position="283"/>
    </location>
    <ligand>
        <name>ATP</name>
        <dbReference type="ChEBI" id="CHEBI:30616"/>
    </ligand>
</feature>
<feature type="binding site" evidence="1">
    <location>
        <begin position="308"/>
        <end position="310"/>
    </location>
    <ligand>
        <name>ATP</name>
        <dbReference type="ChEBI" id="CHEBI:30616"/>
    </ligand>
</feature>
<name>OBG_DEIGD</name>
<evidence type="ECO:0000255" key="1">
    <source>
        <dbReference type="HAMAP-Rule" id="MF_01454"/>
    </source>
</evidence>
<evidence type="ECO:0000255" key="2">
    <source>
        <dbReference type="PROSITE-ProRule" id="PRU01229"/>
    </source>
</evidence>
<evidence type="ECO:0000255" key="3">
    <source>
        <dbReference type="PROSITE-ProRule" id="PRU01231"/>
    </source>
</evidence>
<protein>
    <recommendedName>
        <fullName evidence="1">GTPase Obg</fullName>
        <ecNumber evidence="1">3.6.5.-</ecNumber>
    </recommendedName>
    <alternativeName>
        <fullName evidence="1">GTP-binding protein Obg</fullName>
    </alternativeName>
</protein>
<sequence length="433" mass="47222">MAFRDVLDIEVAAGNGGDGSMSFHRAKYLEKGGPDGGHGGRGGSVILRAIEGVESLERLVGQRKFKAPNGAYGEGRLRQGADGEDLYIDVPVGTTAFDRDSGKVIADLVRVGQEKVIARGGLGGRGNSTFVTSTRQAPRFAELGTPGEKRRVRLELRLIADVGLVGYPNAGKSSLLAALSRANPAIADYPFTTLSPILGVVESADGEKRFTMADIPGIIEGASEGKGLGLEFLRHISRTRLLVYVLDVTRDPAEELRQLQTELRTYDPSLLENVALIALNKIELVDADLAAMVEDELAEFGLPVLPVSAKTGQGLPELRQALFDLLPDRELWARTHALEEEPEEVREEPLTLTFREDAPEKPGEAPERVWEVHGGGFEARIVRFARHLEDAAEYLSNLFKRQGLYNALKRAGAREGDTVEIGSFRFEYYADED</sequence>
<comment type="function">
    <text evidence="1">An essential GTPase which binds GTP, GDP and possibly (p)ppGpp with moderate affinity, with high nucleotide exchange rates and a fairly low GTP hydrolysis rate. Plays a role in control of the cell cycle, stress response, ribosome biogenesis and in those bacteria that undergo differentiation, in morphogenesis control.</text>
</comment>
<comment type="cofactor">
    <cofactor evidence="1">
        <name>Mg(2+)</name>
        <dbReference type="ChEBI" id="CHEBI:18420"/>
    </cofactor>
</comment>
<comment type="subunit">
    <text evidence="1">Monomer.</text>
</comment>
<comment type="subcellular location">
    <subcellularLocation>
        <location evidence="1">Cytoplasm</location>
    </subcellularLocation>
</comment>
<comment type="similarity">
    <text evidence="1">Belongs to the TRAFAC class OBG-HflX-like GTPase superfamily. OBG GTPase family.</text>
</comment>
<organism>
    <name type="scientific">Deinococcus geothermalis (strain DSM 11300 / CIP 105573 / AG-3a)</name>
    <dbReference type="NCBI Taxonomy" id="319795"/>
    <lineage>
        <taxon>Bacteria</taxon>
        <taxon>Thermotogati</taxon>
        <taxon>Deinococcota</taxon>
        <taxon>Deinococci</taxon>
        <taxon>Deinococcales</taxon>
        <taxon>Deinococcaceae</taxon>
        <taxon>Deinococcus</taxon>
    </lineage>
</organism>
<dbReference type="EC" id="3.6.5.-" evidence="1"/>
<dbReference type="EMBL" id="CP000359">
    <property type="protein sequence ID" value="ABF46512.1"/>
    <property type="molecule type" value="Genomic_DNA"/>
</dbReference>
<dbReference type="RefSeq" id="WP_011531333.1">
    <property type="nucleotide sequence ID" value="NC_008025.1"/>
</dbReference>
<dbReference type="SMR" id="Q1IW72"/>
<dbReference type="STRING" id="319795.Dgeo_2218"/>
<dbReference type="KEGG" id="dge:Dgeo_2218"/>
<dbReference type="eggNOG" id="COG0536">
    <property type="taxonomic scope" value="Bacteria"/>
</dbReference>
<dbReference type="HOGENOM" id="CLU_011747_2_0_0"/>
<dbReference type="Proteomes" id="UP000002431">
    <property type="component" value="Chromosome"/>
</dbReference>
<dbReference type="GO" id="GO:0005737">
    <property type="term" value="C:cytoplasm"/>
    <property type="evidence" value="ECO:0007669"/>
    <property type="project" value="UniProtKB-SubCell"/>
</dbReference>
<dbReference type="GO" id="GO:0005524">
    <property type="term" value="F:ATP binding"/>
    <property type="evidence" value="ECO:0007669"/>
    <property type="project" value="UniProtKB-KW"/>
</dbReference>
<dbReference type="GO" id="GO:0005525">
    <property type="term" value="F:GTP binding"/>
    <property type="evidence" value="ECO:0007669"/>
    <property type="project" value="UniProtKB-UniRule"/>
</dbReference>
<dbReference type="GO" id="GO:0003924">
    <property type="term" value="F:GTPase activity"/>
    <property type="evidence" value="ECO:0007669"/>
    <property type="project" value="UniProtKB-UniRule"/>
</dbReference>
<dbReference type="GO" id="GO:0000287">
    <property type="term" value="F:magnesium ion binding"/>
    <property type="evidence" value="ECO:0007669"/>
    <property type="project" value="InterPro"/>
</dbReference>
<dbReference type="GO" id="GO:0042254">
    <property type="term" value="P:ribosome biogenesis"/>
    <property type="evidence" value="ECO:0007669"/>
    <property type="project" value="UniProtKB-UniRule"/>
</dbReference>
<dbReference type="CDD" id="cd01898">
    <property type="entry name" value="Obg"/>
    <property type="match status" value="1"/>
</dbReference>
<dbReference type="FunFam" id="2.70.210.12:FF:000001">
    <property type="entry name" value="GTPase Obg"/>
    <property type="match status" value="1"/>
</dbReference>
<dbReference type="Gene3D" id="3.30.300.350">
    <property type="entry name" value="GTP-binding protein OBG, C-terminal domain"/>
    <property type="match status" value="1"/>
</dbReference>
<dbReference type="Gene3D" id="2.70.210.12">
    <property type="entry name" value="GTP1/OBG domain"/>
    <property type="match status" value="1"/>
</dbReference>
<dbReference type="Gene3D" id="3.40.50.300">
    <property type="entry name" value="P-loop containing nucleotide triphosphate hydrolases"/>
    <property type="match status" value="1"/>
</dbReference>
<dbReference type="HAMAP" id="MF_01454">
    <property type="entry name" value="GTPase_Obg"/>
    <property type="match status" value="1"/>
</dbReference>
<dbReference type="InterPro" id="IPR031167">
    <property type="entry name" value="G_OBG"/>
</dbReference>
<dbReference type="InterPro" id="IPR006073">
    <property type="entry name" value="GTP-bd"/>
</dbReference>
<dbReference type="InterPro" id="IPR014100">
    <property type="entry name" value="GTP-bd_Obg/CgtA"/>
</dbReference>
<dbReference type="InterPro" id="IPR036346">
    <property type="entry name" value="GTP-bd_prot_GTP1/OBG_C_sf"/>
</dbReference>
<dbReference type="InterPro" id="IPR006074">
    <property type="entry name" value="GTP1-OBG_CS"/>
</dbReference>
<dbReference type="InterPro" id="IPR006169">
    <property type="entry name" value="GTP1_OBG_dom"/>
</dbReference>
<dbReference type="InterPro" id="IPR036726">
    <property type="entry name" value="GTP1_OBG_dom_sf"/>
</dbReference>
<dbReference type="InterPro" id="IPR045086">
    <property type="entry name" value="OBG_GTPase"/>
</dbReference>
<dbReference type="InterPro" id="IPR015349">
    <property type="entry name" value="OCT_dom"/>
</dbReference>
<dbReference type="InterPro" id="IPR027417">
    <property type="entry name" value="P-loop_NTPase"/>
</dbReference>
<dbReference type="InterPro" id="IPR005225">
    <property type="entry name" value="Small_GTP-bd"/>
</dbReference>
<dbReference type="NCBIfam" id="TIGR02729">
    <property type="entry name" value="Obg_CgtA"/>
    <property type="match status" value="1"/>
</dbReference>
<dbReference type="NCBIfam" id="TIGR03595">
    <property type="entry name" value="Obg_CgtA_exten"/>
    <property type="match status" value="1"/>
</dbReference>
<dbReference type="NCBIfam" id="NF008954">
    <property type="entry name" value="PRK12296.1"/>
    <property type="match status" value="1"/>
</dbReference>
<dbReference type="NCBIfam" id="NF008955">
    <property type="entry name" value="PRK12297.1"/>
    <property type="match status" value="1"/>
</dbReference>
<dbReference type="NCBIfam" id="NF008956">
    <property type="entry name" value="PRK12299.1"/>
    <property type="match status" value="1"/>
</dbReference>
<dbReference type="NCBIfam" id="TIGR00231">
    <property type="entry name" value="small_GTP"/>
    <property type="match status" value="1"/>
</dbReference>
<dbReference type="PANTHER" id="PTHR11702">
    <property type="entry name" value="DEVELOPMENTALLY REGULATED GTP-BINDING PROTEIN-RELATED"/>
    <property type="match status" value="1"/>
</dbReference>
<dbReference type="PANTHER" id="PTHR11702:SF31">
    <property type="entry name" value="MITOCHONDRIAL RIBOSOME-ASSOCIATED GTPASE 2"/>
    <property type="match status" value="1"/>
</dbReference>
<dbReference type="Pfam" id="PF09269">
    <property type="entry name" value="DUF1967"/>
    <property type="match status" value="1"/>
</dbReference>
<dbReference type="Pfam" id="PF01018">
    <property type="entry name" value="GTP1_OBG"/>
    <property type="match status" value="1"/>
</dbReference>
<dbReference type="Pfam" id="PF01926">
    <property type="entry name" value="MMR_HSR1"/>
    <property type="match status" value="1"/>
</dbReference>
<dbReference type="PIRSF" id="PIRSF002401">
    <property type="entry name" value="GTP_bd_Obg/CgtA"/>
    <property type="match status" value="1"/>
</dbReference>
<dbReference type="PRINTS" id="PR00326">
    <property type="entry name" value="GTP1OBG"/>
</dbReference>
<dbReference type="SUPFAM" id="SSF102741">
    <property type="entry name" value="Obg GTP-binding protein C-terminal domain"/>
    <property type="match status" value="1"/>
</dbReference>
<dbReference type="SUPFAM" id="SSF82051">
    <property type="entry name" value="Obg GTP-binding protein N-terminal domain"/>
    <property type="match status" value="1"/>
</dbReference>
<dbReference type="SUPFAM" id="SSF52540">
    <property type="entry name" value="P-loop containing nucleoside triphosphate hydrolases"/>
    <property type="match status" value="1"/>
</dbReference>
<dbReference type="PROSITE" id="PS51710">
    <property type="entry name" value="G_OBG"/>
    <property type="match status" value="1"/>
</dbReference>
<dbReference type="PROSITE" id="PS00905">
    <property type="entry name" value="GTP1_OBG"/>
    <property type="match status" value="1"/>
</dbReference>
<dbReference type="PROSITE" id="PS51883">
    <property type="entry name" value="OBG"/>
    <property type="match status" value="1"/>
</dbReference>
<dbReference type="PROSITE" id="PS51881">
    <property type="entry name" value="OCT"/>
    <property type="match status" value="1"/>
</dbReference>
<keyword id="KW-0067">ATP-binding</keyword>
<keyword id="KW-0963">Cytoplasm</keyword>
<keyword id="KW-0342">GTP-binding</keyword>
<keyword id="KW-0378">Hydrolase</keyword>
<keyword id="KW-0460">Magnesium</keyword>
<keyword id="KW-0479">Metal-binding</keyword>
<keyword id="KW-0547">Nucleotide-binding</keyword>